<evidence type="ECO:0000250" key="1">
    <source>
        <dbReference type="UniProtKB" id="B6D5I7"/>
    </source>
</evidence>
<evidence type="ECO:0000250" key="2">
    <source>
        <dbReference type="UniProtKB" id="P08159"/>
    </source>
</evidence>
<evidence type="ECO:0000255" key="3"/>
<evidence type="ECO:0000255" key="4">
    <source>
        <dbReference type="PROSITE-ProRule" id="PRU00498"/>
    </source>
</evidence>
<evidence type="ECO:0000255" key="5">
    <source>
        <dbReference type="PROSITE-ProRule" id="PRU00718"/>
    </source>
</evidence>
<evidence type="ECO:0000269" key="6">
    <source>
    </source>
</evidence>
<evidence type="ECO:0000269" key="7">
    <source>
    </source>
</evidence>
<evidence type="ECO:0000269" key="8">
    <source>
    </source>
</evidence>
<evidence type="ECO:0000269" key="9">
    <source>
    </source>
</evidence>
<evidence type="ECO:0000269" key="10">
    <source>
    </source>
</evidence>
<evidence type="ECO:0000269" key="11">
    <source>
    </source>
</evidence>
<evidence type="ECO:0000269" key="12">
    <source>
    </source>
</evidence>
<evidence type="ECO:0000269" key="13">
    <source>
    </source>
</evidence>
<evidence type="ECO:0000269" key="14">
    <source>
    </source>
</evidence>
<evidence type="ECO:0000303" key="15">
    <source>
    </source>
</evidence>
<evidence type="ECO:0000305" key="16"/>
<evidence type="ECO:0000305" key="17">
    <source>
    </source>
</evidence>
<protein>
    <recommendedName>
        <fullName evidence="16">FAD-linked oxidoreductase easE</fullName>
        <ecNumber evidence="16">1.-.-.-</ecNumber>
    </recommendedName>
    <alternativeName>
        <fullName evidence="15">Ergot alkaloid synthesis protein E</fullName>
    </alternativeName>
</protein>
<organism>
    <name type="scientific">Aspergillus fumigatus (strain ATCC MYA-4609 / CBS 101355 / FGSC A1100 / Af293)</name>
    <name type="common">Neosartorya fumigata</name>
    <dbReference type="NCBI Taxonomy" id="330879"/>
    <lineage>
        <taxon>Eukaryota</taxon>
        <taxon>Fungi</taxon>
        <taxon>Dikarya</taxon>
        <taxon>Ascomycota</taxon>
        <taxon>Pezizomycotina</taxon>
        <taxon>Eurotiomycetes</taxon>
        <taxon>Eurotiomycetidae</taxon>
        <taxon>Eurotiales</taxon>
        <taxon>Aspergillaceae</taxon>
        <taxon>Aspergillus</taxon>
        <taxon>Aspergillus subgen. Fumigati</taxon>
    </lineage>
</organism>
<accession>Q4WZ61</accession>
<feature type="signal peptide" evidence="3">
    <location>
        <begin position="1"/>
        <end position="20"/>
    </location>
</feature>
<feature type="chain" id="PRO_5004246710" description="FAD-linked oxidoreductase easE" evidence="3">
    <location>
        <begin position="21"/>
        <end position="628"/>
    </location>
</feature>
<feature type="domain" description="FAD-binding PCMH-type" evidence="5">
    <location>
        <begin position="144"/>
        <end position="328"/>
    </location>
</feature>
<feature type="modified residue" description="Pros-8alpha-FAD histidine" evidence="2">
    <location>
        <position position="182"/>
    </location>
</feature>
<feature type="glycosylation site" description="N-linked (GlcNAc...) asparagine" evidence="4">
    <location>
        <position position="343"/>
    </location>
</feature>
<feature type="glycosylation site" description="N-linked (GlcNAc...) asparagine" evidence="4">
    <location>
        <position position="382"/>
    </location>
</feature>
<feature type="glycosylation site" description="N-linked (GlcNAc...) asparagine" evidence="4">
    <location>
        <position position="487"/>
    </location>
</feature>
<dbReference type="EC" id="1.-.-.-" evidence="16"/>
<dbReference type="EMBL" id="AAHF01000001">
    <property type="protein sequence ID" value="EAL94104.1"/>
    <property type="molecule type" value="Genomic_DNA"/>
</dbReference>
<dbReference type="RefSeq" id="XP_756142.1">
    <property type="nucleotide sequence ID" value="XM_751049.1"/>
</dbReference>
<dbReference type="SMR" id="Q4WZ61"/>
<dbReference type="STRING" id="330879.Q4WZ61"/>
<dbReference type="GlyCosmos" id="Q4WZ61">
    <property type="glycosylation" value="3 sites, No reported glycans"/>
</dbReference>
<dbReference type="EnsemblFungi" id="EAL94104">
    <property type="protein sequence ID" value="EAL94104"/>
    <property type="gene ID" value="AFUA_2G18050"/>
</dbReference>
<dbReference type="GeneID" id="3512717"/>
<dbReference type="KEGG" id="afm:AFUA_2G18050"/>
<dbReference type="VEuPathDB" id="FungiDB:Afu2g18050"/>
<dbReference type="eggNOG" id="ENOG502R8I5">
    <property type="taxonomic scope" value="Eukaryota"/>
</dbReference>
<dbReference type="HOGENOM" id="CLU_018354_4_4_1"/>
<dbReference type="InParanoid" id="Q4WZ61"/>
<dbReference type="OMA" id="CHQGRIP"/>
<dbReference type="OrthoDB" id="9983560at2759"/>
<dbReference type="UniPathway" id="UPA00327"/>
<dbReference type="Proteomes" id="UP000002530">
    <property type="component" value="Chromosome 2"/>
</dbReference>
<dbReference type="GO" id="GO:0071949">
    <property type="term" value="F:FAD binding"/>
    <property type="evidence" value="ECO:0007669"/>
    <property type="project" value="InterPro"/>
</dbReference>
<dbReference type="GO" id="GO:0016491">
    <property type="term" value="F:oxidoreductase activity"/>
    <property type="evidence" value="ECO:0000318"/>
    <property type="project" value="GO_Central"/>
</dbReference>
<dbReference type="GO" id="GO:1900809">
    <property type="term" value="P:fumigaclavine C biosynthetic process"/>
    <property type="evidence" value="ECO:0000314"/>
    <property type="project" value="GO_Central"/>
</dbReference>
<dbReference type="Gene3D" id="3.30.465.10">
    <property type="match status" value="2"/>
</dbReference>
<dbReference type="InterPro" id="IPR012951">
    <property type="entry name" value="BBE"/>
</dbReference>
<dbReference type="InterPro" id="IPR016166">
    <property type="entry name" value="FAD-bd_PCMH"/>
</dbReference>
<dbReference type="InterPro" id="IPR036318">
    <property type="entry name" value="FAD-bd_PCMH-like_sf"/>
</dbReference>
<dbReference type="InterPro" id="IPR016169">
    <property type="entry name" value="FAD-bd_PCMH_sub2"/>
</dbReference>
<dbReference type="InterPro" id="IPR050416">
    <property type="entry name" value="FAD-linked_Oxidoreductase"/>
</dbReference>
<dbReference type="InterPro" id="IPR006094">
    <property type="entry name" value="Oxid_FAD_bind_N"/>
</dbReference>
<dbReference type="PANTHER" id="PTHR42973">
    <property type="entry name" value="BINDING OXIDOREDUCTASE, PUTATIVE (AFU_ORTHOLOGUE AFUA_1G17690)-RELATED"/>
    <property type="match status" value="1"/>
</dbReference>
<dbReference type="PANTHER" id="PTHR42973:SF39">
    <property type="entry name" value="FAD-BINDING PCMH-TYPE DOMAIN-CONTAINING PROTEIN"/>
    <property type="match status" value="1"/>
</dbReference>
<dbReference type="Pfam" id="PF08031">
    <property type="entry name" value="BBE"/>
    <property type="match status" value="1"/>
</dbReference>
<dbReference type="Pfam" id="PF01565">
    <property type="entry name" value="FAD_binding_4"/>
    <property type="match status" value="1"/>
</dbReference>
<dbReference type="SUPFAM" id="SSF56176">
    <property type="entry name" value="FAD-binding/transporter-associated domain-like"/>
    <property type="match status" value="1"/>
</dbReference>
<dbReference type="PROSITE" id="PS51387">
    <property type="entry name" value="FAD_PCMH"/>
    <property type="match status" value="1"/>
</dbReference>
<reference key="1">
    <citation type="journal article" date="2005" name="Nature">
        <title>Genomic sequence of the pathogenic and allergenic filamentous fungus Aspergillus fumigatus.</title>
        <authorList>
            <person name="Nierman W.C."/>
            <person name="Pain A."/>
            <person name="Anderson M.J."/>
            <person name="Wortman J.R."/>
            <person name="Kim H.S."/>
            <person name="Arroyo J."/>
            <person name="Berriman M."/>
            <person name="Abe K."/>
            <person name="Archer D.B."/>
            <person name="Bermejo C."/>
            <person name="Bennett J.W."/>
            <person name="Bowyer P."/>
            <person name="Chen D."/>
            <person name="Collins M."/>
            <person name="Coulsen R."/>
            <person name="Davies R."/>
            <person name="Dyer P.S."/>
            <person name="Farman M.L."/>
            <person name="Fedorova N."/>
            <person name="Fedorova N.D."/>
            <person name="Feldblyum T.V."/>
            <person name="Fischer R."/>
            <person name="Fosker N."/>
            <person name="Fraser A."/>
            <person name="Garcia J.L."/>
            <person name="Garcia M.J."/>
            <person name="Goble A."/>
            <person name="Goldman G.H."/>
            <person name="Gomi K."/>
            <person name="Griffith-Jones S."/>
            <person name="Gwilliam R."/>
            <person name="Haas B.J."/>
            <person name="Haas H."/>
            <person name="Harris D.E."/>
            <person name="Horiuchi H."/>
            <person name="Huang J."/>
            <person name="Humphray S."/>
            <person name="Jimenez J."/>
            <person name="Keller N."/>
            <person name="Khouri H."/>
            <person name="Kitamoto K."/>
            <person name="Kobayashi T."/>
            <person name="Konzack S."/>
            <person name="Kulkarni R."/>
            <person name="Kumagai T."/>
            <person name="Lafton A."/>
            <person name="Latge J.-P."/>
            <person name="Li W."/>
            <person name="Lord A."/>
            <person name="Lu C."/>
            <person name="Majoros W.H."/>
            <person name="May G.S."/>
            <person name="Miller B.L."/>
            <person name="Mohamoud Y."/>
            <person name="Molina M."/>
            <person name="Monod M."/>
            <person name="Mouyna I."/>
            <person name="Mulligan S."/>
            <person name="Murphy L.D."/>
            <person name="O'Neil S."/>
            <person name="Paulsen I."/>
            <person name="Penalva M.A."/>
            <person name="Pertea M."/>
            <person name="Price C."/>
            <person name="Pritchard B.L."/>
            <person name="Quail M.A."/>
            <person name="Rabbinowitsch E."/>
            <person name="Rawlins N."/>
            <person name="Rajandream M.A."/>
            <person name="Reichard U."/>
            <person name="Renauld H."/>
            <person name="Robson G.D."/>
            <person name="Rodriguez de Cordoba S."/>
            <person name="Rodriguez-Pena J.M."/>
            <person name="Ronning C.M."/>
            <person name="Rutter S."/>
            <person name="Salzberg S.L."/>
            <person name="Sanchez M."/>
            <person name="Sanchez-Ferrero J.C."/>
            <person name="Saunders D."/>
            <person name="Seeger K."/>
            <person name="Squares R."/>
            <person name="Squares S."/>
            <person name="Takeuchi M."/>
            <person name="Tekaia F."/>
            <person name="Turner G."/>
            <person name="Vazquez de Aldana C.R."/>
            <person name="Weidman J."/>
            <person name="White O."/>
            <person name="Woodward J.R."/>
            <person name="Yu J.-H."/>
            <person name="Fraser C.M."/>
            <person name="Galagan J.E."/>
            <person name="Asai K."/>
            <person name="Machida M."/>
            <person name="Hall N."/>
            <person name="Barrell B.G."/>
            <person name="Denning D.W."/>
        </authorList>
    </citation>
    <scope>NUCLEOTIDE SEQUENCE [LARGE SCALE GENOMIC DNA]</scope>
    <source>
        <strain>ATCC MYA-4609 / CBS 101355 / FGSC A1100 / Af293</strain>
    </source>
</reference>
<reference key="2">
    <citation type="journal article" date="2005" name="Appl. Environ. Microbiol.">
        <title>An ergot alkaloid biosynthesis gene and clustered hypothetical genes from Aspergillus fumigatus.</title>
        <authorList>
            <person name="Coyle C.M."/>
            <person name="Panaccione D.G."/>
        </authorList>
    </citation>
    <scope>IDENTIFICATION</scope>
    <scope>FUNCTION</scope>
</reference>
<reference key="3">
    <citation type="journal article" date="2005" name="Microbiology">
        <title>Overproduction, purification and characterization of FgaPT2, a dimethylallyltryptophan synthase from Aspergillus fumigatus.</title>
        <authorList>
            <person name="Unsoeld I.A."/>
            <person name="Li S.-M."/>
        </authorList>
    </citation>
    <scope>FUNCTION</scope>
</reference>
<reference key="4">
    <citation type="journal article" date="2009" name="ChemBioChem">
        <title>Ergot alkaloid biosynthesis in Aspergillus fumigatus: FgaAT catalyses the acetylation of fumigaclavine B.</title>
        <authorList>
            <person name="Liu X."/>
            <person name="Wang L."/>
            <person name="Steffan N."/>
            <person name="Yin W.B."/>
            <person name="Li S.M."/>
        </authorList>
    </citation>
    <scope>FUNCTION</scope>
</reference>
<reference key="5">
    <citation type="journal article" date="2009" name="Eukaryot. Cell">
        <title>Transcriptional profiling identifies a role for BrlA in the response to nitrogen depletion and for StuA in the regulation of secondary metabolite clusters in Aspergillus fumigatus.</title>
        <authorList>
            <person name="Twumasi-Boateng K."/>
            <person name="Yu Y."/>
            <person name="Chen D."/>
            <person name="Gravelat F.N."/>
            <person name="Nierman W.C."/>
            <person name="Sheppard D.C."/>
        </authorList>
    </citation>
    <scope>INDUCTION</scope>
</reference>
<reference key="6">
    <citation type="journal article" date="2009" name="Mol. Plant Pathol.">
        <title>Ergot: from witchcraft to biotechnology.</title>
        <authorList>
            <person name="Haarmann T."/>
            <person name="Rolke Y."/>
            <person name="Giesbert S."/>
            <person name="Tudzynski P."/>
        </authorList>
    </citation>
    <scope>BIOTECHNOLOGY</scope>
</reference>
<reference key="7">
    <citation type="journal article" date="2010" name="Arch. Microbiol.">
        <title>Ergot alkaloid biosynthesis in Aspergillus fumigatus: conversion of chanoclavine-I to chanoclavine-I aldehyde catalyzed by a short-chain alcohol dehydrogenase FgaDH.</title>
        <authorList>
            <person name="Wallwey C."/>
            <person name="Matuschek M."/>
            <person name="Li S.M."/>
        </authorList>
    </citation>
    <scope>FUNCTION</scope>
</reference>
<reference key="8">
    <citation type="journal article" date="2010" name="Org. Biomol. Chem.">
        <title>Ergot alkaloid biosynthesis in Aspergillus fumigatus: Conversion of chanoclavine-I aldehyde to festuclavine by the festuclavine synthase FgaFS in the presence of the old yellow enzyme FgaOx3.</title>
        <authorList>
            <person name="Wallwey C."/>
            <person name="Matuschek M."/>
            <person name="Xie X.L."/>
            <person name="Li S.M."/>
        </authorList>
    </citation>
    <scope>FUNCTION</scope>
</reference>
<reference key="9">
    <citation type="journal article" date="2011" name="Curr. Genet.">
        <title>Ergot cluster-encoded catalase is required for synthesis of chanoclavine-I in Aspergillus fumigatus.</title>
        <authorList>
            <person name="Goetz K.E."/>
            <person name="Coyle C.M."/>
            <person name="Cheng J.Z."/>
            <person name="O'Connor S.E."/>
            <person name="Panaccione D.G."/>
        </authorList>
    </citation>
    <scope>FUNCTION</scope>
</reference>
<reference key="10">
    <citation type="journal article" date="2012" name="Mycologia">
        <title>Chemotypic and genotypic diversity in the ergot alkaloid pathway of Aspergillus fumigatus.</title>
        <authorList>
            <person name="Robinson S.L."/>
            <person name="Panaccione D.G."/>
        </authorList>
    </citation>
    <scope>IDENTIFICATION</scope>
    <scope>NOMENCLATURE</scope>
</reference>
<reference key="11">
    <citation type="journal article" date="2013" name="Toxins">
        <title>Partial reconstruction of the ergot alkaloid pathway by heterologous gene expression in Aspergillus nidulans.</title>
        <authorList>
            <person name="Ryan K.L."/>
            <person name="Moore C.T."/>
            <person name="Panaccione D.G."/>
        </authorList>
    </citation>
    <scope>FUNCTION</scope>
    <scope>PATHWAY</scope>
</reference>
<reference key="12">
    <citation type="journal article" date="2016" name="Curr. Genet.">
        <title>Functional analysis of the gene controlling hydroxylation of festuclavine in the ergot alkaloid pathway of Neosartorya fumigata.</title>
        <authorList>
            <person name="Bilovol Y."/>
            <person name="Panaccione D.G."/>
        </authorList>
    </citation>
    <scope>FUNCTION</scope>
</reference>
<keyword id="KW-0017">Alkaloid metabolism</keyword>
<keyword id="KW-0274">FAD</keyword>
<keyword id="KW-0285">Flavoprotein</keyword>
<keyword id="KW-0325">Glycoprotein</keyword>
<keyword id="KW-0560">Oxidoreductase</keyword>
<keyword id="KW-1185">Reference proteome</keyword>
<keyword id="KW-0732">Signal</keyword>
<name>EASE_ASPFU</name>
<gene>
    <name evidence="15" type="primary">easE</name>
    <name type="ORF">AFUA_2G18050</name>
</gene>
<proteinExistence type="evidence at transcript level"/>
<comment type="function">
    <text evidence="1 6 7 9 10 11 12 13 14">FAD binding oxidoreductase; part of the gene cluster that mediates the biosynthesis of fumiclavanine C, a fungal ergot alkaloid (PubMed:15933009, PubMed:23435153, PubMed:26972831). DmaW catalyzes the first step of ergot alkaloid biosynthesis by condensing dimethylallyl diphosphate (DMAP) and tryptophan to form 4-dimethylallyl-L-tryptophan (PubMed:15870460). The second step is catalyzed by the methyltransferase easF that methylates 4-dimethylallyl-L-tryptophan in the presence of S-adenosyl-L-methionine, resulting in the formation of 4-dimethylallyl-L-abrine (By similarity). The catalase easC and the FAD-dependent oxidoreductase easE then transform 4-dimethylallyl-L-abrine to chanoclavine-I which is further oxidized by EasD in the presence of NAD(+), resulting in the formation of chanoclavine-I aldehyde (PubMed:20039019, PubMed:20526482, PubMed:21409592, PubMed:23435153). EasA reduces chanoclavine-I aldehyde to dihydrochanoclavine-I aldehyde that spontaneously dehydrates to form 6,8-dimethyl-6,7-didehydroergoline (PubMed:20526482). EasG then catalyzes the reduction of 6,8-dimethyl-6,7-didehydroergoline to form festuclavine (PubMed:20526482). Hydrolysis of festuclavine by easM then leads to the formation of fumigaclavine B which is in turn acetylated by easN to fumigaclavine A (PubMed:26972831). Finally, easL catalyzes the conversion of fumigaclavine A into fumigaclavine C by attaching a dimethylallyl moiety to C-2 of the indole nucleus (PubMed:19672909).</text>
</comment>
<comment type="cofactor">
    <cofactor evidence="16">
        <name>FAD</name>
        <dbReference type="ChEBI" id="CHEBI:57692"/>
    </cofactor>
</comment>
<comment type="pathway">
    <text evidence="13">Alkaloid biosynthesis; ergot alkaloid biosynthesis.</text>
</comment>
<comment type="induction">
    <text evidence="8">The expression of the ergot alkaloid synthesis cluster which leads to the synthesis of fumigaclavines is positively regulated by the brlA and stuA transcription factors (PubMed:19028996).</text>
</comment>
<comment type="biotechnology">
    <text evidence="17">Ergot alkaloids are known for their toxic effects on humans who consume contaminated grains or livestock that graze on grasses harboring ergot alkaloid-producing fungi (PubMed:19523108). Due to their strong affinity for monoamine neurotransmitter receptors they may also have clinical uses such as treatment of migraines, Parkinson's disease and cerebrovascular insufficiency (PubMed:19523108).</text>
</comment>
<comment type="similarity">
    <text evidence="16">Belongs to the oxygen-dependent FAD-linked oxidoreductase family.</text>
</comment>
<sequence>MSHRILCVAFCVCSLVAVSSIYSPPFNHPIVYSNNAICFQLSTWRIPQLYLAVLIRRFDLSLSTRGVMLAVTVGVGSSQHHSQRSGLSLTFAMTPSMITLLVKTCVISQRTAVGEPHRPGWVWEVGRTEDETCHAHSPRGAPCHQGRIPLYSAAVESVDQIQVAVRFAQRHRLRLVVRNTGHDTAGRSSGSDSFQIHCHRMKQIEYHDNFRALGSDIDRGPAVSVGAGVTLGEMYARGARDGWVVVGGECPTVGAAGGFLQGGGVSSFHSFIDGLAVDNVLEFEVVTAKGDVVVANDHQNPDIFWALRGGGGGTFGIVTRATMRVHLNSPVCVSEVAVSGLRNNSLLWTKGITGLFSILRSFNQQGIPGQFILRPLSKDQVNASLTLYSLNTDDTRRSAENMLSIRNILESTTLPFTLASRCLPKISDALRKGPDMLPVNYGIITGSVLVSEDLFNSEEGPLHLAKQLEHFPMGPMDLLFTSNLGGNVSANTGKKHRDTSMHPGWRQAAHLINFVRSVSTPTAHEKARSLEELHSVQMRQLYDIEPDFRVSYRNLGDPLESDAAQVYWGPNYKRLLEIKRKWDPEDLFFSQLGVGSEGWTEDQMCKRQQRLQQMLQYLMSSIAQRVYR</sequence>